<reference key="1">
    <citation type="journal article" date="2004" name="Proc. Natl. Acad. Sci. U.S.A.">
        <title>The diploid genome sequence of Candida albicans.</title>
        <authorList>
            <person name="Jones T."/>
            <person name="Federspiel N.A."/>
            <person name="Chibana H."/>
            <person name="Dungan J."/>
            <person name="Kalman S."/>
            <person name="Magee B.B."/>
            <person name="Newport G."/>
            <person name="Thorstenson Y.R."/>
            <person name="Agabian N."/>
            <person name="Magee P.T."/>
            <person name="Davis R.W."/>
            <person name="Scherer S."/>
        </authorList>
    </citation>
    <scope>NUCLEOTIDE SEQUENCE [LARGE SCALE GENOMIC DNA]</scope>
    <source>
        <strain>SC5314 / ATCC MYA-2876</strain>
    </source>
</reference>
<reference key="2">
    <citation type="journal article" date="2007" name="Genome Biol.">
        <title>Assembly of the Candida albicans genome into sixteen supercontigs aligned on the eight chromosomes.</title>
        <authorList>
            <person name="van het Hoog M."/>
            <person name="Rast T.J."/>
            <person name="Martchenko M."/>
            <person name="Grindle S."/>
            <person name="Dignard D."/>
            <person name="Hogues H."/>
            <person name="Cuomo C."/>
            <person name="Berriman M."/>
            <person name="Scherer S."/>
            <person name="Magee B.B."/>
            <person name="Whiteway M."/>
            <person name="Chibana H."/>
            <person name="Nantel A."/>
            <person name="Magee P.T."/>
        </authorList>
    </citation>
    <scope>GENOME REANNOTATION</scope>
    <source>
        <strain>SC5314 / ATCC MYA-2876</strain>
    </source>
</reference>
<reference key="3">
    <citation type="journal article" date="2013" name="Genome Biol.">
        <title>Assembly of a phased diploid Candida albicans genome facilitates allele-specific measurements and provides a simple model for repeat and indel structure.</title>
        <authorList>
            <person name="Muzzey D."/>
            <person name="Schwartz K."/>
            <person name="Weissman J.S."/>
            <person name="Sherlock G."/>
        </authorList>
    </citation>
    <scope>NUCLEOTIDE SEQUENCE [LARGE SCALE GENOMIC DNA]</scope>
    <scope>GENOME REANNOTATION</scope>
    <source>
        <strain>SC5314 / ATCC MYA-2876</strain>
    </source>
</reference>
<reference key="4">
    <citation type="journal article" date="2002" name="Mol. Biol. Cell">
        <title>Transcription profiling of Candida albicans cells undergoing the yeast-to-hyphal transition.</title>
        <authorList>
            <person name="Nantel A."/>
            <person name="Dignard D."/>
            <person name="Bachewich C."/>
            <person name="Harcus D."/>
            <person name="Marcil A."/>
            <person name="Bouin A.P."/>
            <person name="Sensen C.W."/>
            <person name="Hogues H."/>
            <person name="van het Hoog M."/>
            <person name="Gordon P."/>
            <person name="Rigby T."/>
            <person name="Benoit F."/>
            <person name="Tessier D.C."/>
            <person name="Thomas D.Y."/>
            <person name="Whiteway M."/>
        </authorList>
    </citation>
    <scope>INDUCTION</scope>
</reference>
<reference key="5">
    <citation type="journal article" date="2004" name="Mol. Microbiol.">
        <title>Transcriptional profiling in Candida albicans reveals new adaptive responses to extracellular pH and functions for Rim101p.</title>
        <authorList>
            <person name="Bensen E.S."/>
            <person name="Martin S.J."/>
            <person name="Li M."/>
            <person name="Berman J."/>
            <person name="Davis D.A."/>
        </authorList>
    </citation>
    <scope>INDUCTION</scope>
</reference>
<reference key="6">
    <citation type="journal article" date="2005" name="Eukaryot. Cell">
        <title>Genome-wide transcription profiling of the early phase of biofilm formation by Candida albicans.</title>
        <authorList>
            <person name="Murillo L.A."/>
            <person name="Newport G."/>
            <person name="Lan C.Y."/>
            <person name="Habelitz S."/>
            <person name="Dungan J."/>
            <person name="Agabian N.M."/>
        </authorList>
    </citation>
    <scope>INDUCTION</scope>
</reference>
<reference key="7">
    <citation type="journal article" date="2005" name="Mol. Biol. Cell">
        <title>Induction of the Candida albicans filamentous growth program by relief of transcriptional repression: a genome-wide analysis.</title>
        <authorList>
            <person name="Kadosh D."/>
            <person name="Johnson A.D."/>
        </authorList>
    </citation>
    <scope>INDUCTION</scope>
</reference>
<reference key="8">
    <citation type="journal article" date="2005" name="Mol. Microbiol.">
        <title>The moonlighting protein Tsa1p is implicated in oxidative stress response and in cell wall biogenesis in Candida albicans.</title>
        <authorList>
            <person name="Urban C."/>
            <person name="Xiong X."/>
            <person name="Sohn K."/>
            <person name="Schroppel K."/>
            <person name="Brunner H."/>
            <person name="Rupp S."/>
        </authorList>
    </citation>
    <scope>INDUCTION</scope>
</reference>
<reference key="9">
    <citation type="journal article" date="2006" name="Mol. Biol. Cell">
        <title>The Flo8 transcription factor is essential for hyphal development and virulence in Candida albicans.</title>
        <authorList>
            <person name="Cao F."/>
            <person name="Lane S."/>
            <person name="Raniga P.P."/>
            <person name="Lu Y."/>
            <person name="Zhou Z."/>
            <person name="Ramon K."/>
            <person name="Chen J."/>
            <person name="Liu H."/>
        </authorList>
    </citation>
    <scope>INDUCTION</scope>
</reference>
<reference key="10">
    <citation type="journal article" date="2007" name="Yeast">
        <title>Regulation of sugar transport and metabolism by the Candida albicans Rgt1 transcriptional repressor.</title>
        <authorList>
            <person name="Sexton J.A."/>
            <person name="Brown V."/>
            <person name="Johnston M."/>
        </authorList>
    </citation>
    <scope>INDUCTION</scope>
</reference>
<reference key="11">
    <citation type="journal article" date="2009" name="Fungal Genet. Biol.">
        <title>Genome-wide analysis of Candida albicans gene expression patterns during infection of the mammalian kidney.</title>
        <authorList>
            <person name="Walker L.A."/>
            <person name="Maccallum D.M."/>
            <person name="Bertram G."/>
            <person name="Gow N.A."/>
            <person name="Odds F.C."/>
            <person name="Brown A.J."/>
        </authorList>
    </citation>
    <scope>INDUCTION</scope>
</reference>
<reference key="12">
    <citation type="journal article" date="2011" name="Microbiology">
        <title>Mass spectrometric quantification of the adaptations in the wall proteome of Candida albicans in response to ambient pH.</title>
        <authorList>
            <person name="Sosinska G.J."/>
            <person name="de Koning L.J."/>
            <person name="de Groot P.W."/>
            <person name="Manders E.M."/>
            <person name="Dekker H.L."/>
            <person name="Hellingwerf K.J."/>
            <person name="de Koster C.G."/>
            <person name="Klis F.M."/>
        </authorList>
    </citation>
    <scope>IDENTIFICATION BY MASS SPECTROMETRY</scope>
    <scope>SUBCELLULAR LOCATION</scope>
</reference>
<reference key="13">
    <citation type="journal article" date="2012" name="Eukaryot. Cell">
        <title>Divergent targets of Candida albicans biofilm regulator Bcr1 in vitro and in vivo.</title>
        <authorList>
            <person name="Fanning S."/>
            <person name="Xu W."/>
            <person name="Solis N."/>
            <person name="Woolford C.A."/>
            <person name="Filler S.G."/>
            <person name="Mitchell A.P."/>
        </authorList>
    </citation>
    <scope>INDUCTION</scope>
</reference>
<reference key="14">
    <citation type="journal article" date="2013" name="Mol. Biol. Cell">
        <title>A genome-wide transcriptional analysis of morphology determination in Candida albicans.</title>
        <authorList>
            <person name="Carlisle P.L."/>
            <person name="Kadosh D."/>
        </authorList>
    </citation>
    <scope>INDUCTION</scope>
</reference>
<reference key="15">
    <citation type="journal article" date="2013" name="PLoS ONE">
        <title>A core filamentation response network in Candida albicans is restricted to eight genes.</title>
        <authorList>
            <person name="Martin R."/>
            <person name="Albrecht-Eckardt D."/>
            <person name="Brunke S."/>
            <person name="Hube B."/>
            <person name="Hunniger K."/>
            <person name="Kurzai O."/>
        </authorList>
    </citation>
    <scope>INDUCTION</scope>
    <scope>FUNCTION</scope>
</reference>
<comment type="function">
    <text evidence="14">GPI-anchored cell wall protein that may be involved in cell wall organization, hyphal growth, as well as in virulence.</text>
</comment>
<comment type="subcellular location">
    <subcellularLocation>
        <location evidence="11">Secreted</location>
        <location evidence="11">Cell wall</location>
    </subcellularLocation>
    <subcellularLocation>
        <location evidence="15">Membrane</location>
        <topology evidence="15">Lipid-anchor</topology>
        <topology evidence="15">GPI-anchor</topology>
    </subcellularLocation>
</comment>
<comment type="induction">
    <text evidence="3 4 5 6 7 8 9 10 12 13 14">Induced during yeast to hyphae transition, during biofilm formation, during oralpharyngeal candidasis, and in response to serum. Regulated BY FLO8, NRG1, RFG1, RGT1, TUP1, TSA1, and UME6.</text>
</comment>
<comment type="PTM">
    <text>The GPI-anchor is attached to the protein in the endoplasmic reticulum and serves to target the protein to the cell surface. There, the glucosamine-inositol phospholipid moiety is cleaved off and the GPI-modified mannoprotein is covalently attached via its lipidless GPI glycan remnant to the 1,6-beta-glucan of the outer cell wall layer.</text>
</comment>
<comment type="similarity">
    <text evidence="15">Belongs to the IHD1 family.</text>
</comment>
<organism>
    <name type="scientific">Candida albicans (strain SC5314 / ATCC MYA-2876)</name>
    <name type="common">Yeast</name>
    <dbReference type="NCBI Taxonomy" id="237561"/>
    <lineage>
        <taxon>Eukaryota</taxon>
        <taxon>Fungi</taxon>
        <taxon>Dikarya</taxon>
        <taxon>Ascomycota</taxon>
        <taxon>Saccharomycotina</taxon>
        <taxon>Pichiomycetes</taxon>
        <taxon>Debaryomycetaceae</taxon>
        <taxon>Candida/Lodderomyces clade</taxon>
        <taxon>Candida</taxon>
    </lineage>
</organism>
<name>IHD1_CANAL</name>
<proteinExistence type="evidence at protein level"/>
<dbReference type="EMBL" id="CP017628">
    <property type="protein sequence ID" value="AOW30312.1"/>
    <property type="molecule type" value="Genomic_DNA"/>
</dbReference>
<dbReference type="RefSeq" id="XP_718096.1">
    <property type="nucleotide sequence ID" value="XM_713003.1"/>
</dbReference>
<dbReference type="STRING" id="237561.Q5A8I8"/>
<dbReference type="GlyCosmos" id="Q5A8I8">
    <property type="glycosylation" value="7 sites, No reported glycans"/>
</dbReference>
<dbReference type="EnsemblFungi" id="C6_03850C_A-T">
    <property type="protein sequence ID" value="C6_03850C_A-T-p1"/>
    <property type="gene ID" value="C6_03850C_A"/>
</dbReference>
<dbReference type="GeneID" id="3640291"/>
<dbReference type="KEGG" id="cal:CAALFM_C603850CA"/>
<dbReference type="CGD" id="CAL0000194292">
    <property type="gene designation" value="IHD1"/>
</dbReference>
<dbReference type="VEuPathDB" id="FungiDB:C6_03850C_A"/>
<dbReference type="eggNOG" id="ENOG502SFRC">
    <property type="taxonomic scope" value="Eukaryota"/>
</dbReference>
<dbReference type="HOGENOM" id="CLU_703979_0_0_1"/>
<dbReference type="InParanoid" id="Q5A8I8"/>
<dbReference type="OrthoDB" id="4026676at2759"/>
<dbReference type="PRO" id="PR:Q5A8I8"/>
<dbReference type="Proteomes" id="UP000000559">
    <property type="component" value="Chromosome 6"/>
</dbReference>
<dbReference type="GO" id="GO:0005576">
    <property type="term" value="C:extracellular region"/>
    <property type="evidence" value="ECO:0007669"/>
    <property type="project" value="UniProtKB-KW"/>
</dbReference>
<dbReference type="GO" id="GO:0098552">
    <property type="term" value="C:side of membrane"/>
    <property type="evidence" value="ECO:0007669"/>
    <property type="project" value="UniProtKB-KW"/>
</dbReference>
<feature type="signal peptide" evidence="1">
    <location>
        <begin position="1"/>
        <end position="16"/>
    </location>
</feature>
<feature type="chain" id="PRO_0000424735" description="Induced during hyphae development protein 1">
    <location>
        <begin position="17"/>
        <end position="363"/>
    </location>
</feature>
<feature type="propeptide" id="PRO_0000424736" description="Removed in mature form" evidence="1">
    <location>
        <begin position="364"/>
        <end position="392"/>
    </location>
</feature>
<feature type="region of interest" description="Disordered" evidence="2">
    <location>
        <begin position="95"/>
        <end position="375"/>
    </location>
</feature>
<feature type="compositionally biased region" description="Low complexity" evidence="2">
    <location>
        <begin position="96"/>
        <end position="147"/>
    </location>
</feature>
<feature type="compositionally biased region" description="Polar residues" evidence="2">
    <location>
        <begin position="148"/>
        <end position="161"/>
    </location>
</feature>
<feature type="compositionally biased region" description="Low complexity" evidence="2">
    <location>
        <begin position="162"/>
        <end position="191"/>
    </location>
</feature>
<feature type="compositionally biased region" description="Low complexity" evidence="2">
    <location>
        <begin position="199"/>
        <end position="232"/>
    </location>
</feature>
<feature type="compositionally biased region" description="Polar residues" evidence="2">
    <location>
        <begin position="237"/>
        <end position="250"/>
    </location>
</feature>
<feature type="compositionally biased region" description="Low complexity" evidence="2">
    <location>
        <begin position="251"/>
        <end position="371"/>
    </location>
</feature>
<feature type="lipid moiety-binding region" description="GPI-anchor amidated serine" evidence="1">
    <location>
        <position position="363"/>
    </location>
</feature>
<feature type="glycosylation site" description="N-linked (GlcNAc...) asparagine" evidence="1">
    <location>
        <position position="75"/>
    </location>
</feature>
<feature type="glycosylation site" description="N-linked (GlcNAc...) asparagine" evidence="1">
    <location>
        <position position="139"/>
    </location>
</feature>
<feature type="glycosylation site" description="N-linked (GlcNAc...) asparagine" evidence="1">
    <location>
        <position position="155"/>
    </location>
</feature>
<feature type="glycosylation site" description="N-linked (GlcNAc...) asparagine" evidence="1">
    <location>
        <position position="195"/>
    </location>
</feature>
<feature type="glycosylation site" description="N-linked (GlcNAc...) asparagine" evidence="1">
    <location>
        <position position="270"/>
    </location>
</feature>
<feature type="glycosylation site" description="N-linked (GlcNAc...) asparagine" evidence="1">
    <location>
        <position position="274"/>
    </location>
</feature>
<feature type="glycosylation site" description="N-linked (GlcNAc...) asparagine" evidence="1">
    <location>
        <position position="294"/>
    </location>
</feature>
<sequence>MRPTPLFFALLQIALAAKRADQICNDHCSNAYQKQQSCGGTDDVSSQSATLKCLCADESYWSELASCDCSSYDSNVSAQDLRAYYCNVGVTGGSQGQSTSGDANAATNSNDATGTATDAAAATNGNDGASGTADANNANNTDGSGATDASNTNNNGSTDTVNTNTAGSGSSETTAAAGAAAGTAAGTNSASDQANETGSDATNAATGSDASGTAATNTASTASGATSGSGSDAAKKTGTNTDSDSDTATKGSDATAGSMTTAASGLGATNGTSNSTGSHSGSMTSITTGSGFTNGTSSRSGSGSGSSTRSGSNSDSSSSGSGSRSSSSADSSDSDSGSGSSSTESGSGSGSGSSTSSGSGSGSGSSTRSGGFAATIPTVTFGSLVALALNLL</sequence>
<evidence type="ECO:0000255" key="1"/>
<evidence type="ECO:0000256" key="2">
    <source>
        <dbReference type="SAM" id="MobiDB-lite"/>
    </source>
</evidence>
<evidence type="ECO:0000269" key="3">
    <source>
    </source>
</evidence>
<evidence type="ECO:0000269" key="4">
    <source>
    </source>
</evidence>
<evidence type="ECO:0000269" key="5">
    <source>
    </source>
</evidence>
<evidence type="ECO:0000269" key="6">
    <source>
    </source>
</evidence>
<evidence type="ECO:0000269" key="7">
    <source>
    </source>
</evidence>
<evidence type="ECO:0000269" key="8">
    <source>
    </source>
</evidence>
<evidence type="ECO:0000269" key="9">
    <source>
    </source>
</evidence>
<evidence type="ECO:0000269" key="10">
    <source>
    </source>
</evidence>
<evidence type="ECO:0000269" key="11">
    <source>
    </source>
</evidence>
<evidence type="ECO:0000269" key="12">
    <source>
    </source>
</evidence>
<evidence type="ECO:0000269" key="13">
    <source>
    </source>
</evidence>
<evidence type="ECO:0000269" key="14">
    <source>
    </source>
</evidence>
<evidence type="ECO:0000305" key="15"/>
<protein>
    <recommendedName>
        <fullName>Induced during hyphae development protein 1</fullName>
    </recommendedName>
    <alternativeName>
        <fullName>GPI-anchored protein 36</fullName>
    </alternativeName>
</protein>
<accession>Q5A8I8</accession>
<accession>A0A1D8PQA4</accession>
<gene>
    <name type="primary">IHD1</name>
    <name type="synonym">PGA36</name>
    <name type="ordered locus">CAALFM_C603850CA</name>
    <name type="ORF">CaO19.13183</name>
    <name type="ORF">CaO19.5760</name>
</gene>
<keyword id="KW-0134">Cell wall</keyword>
<keyword id="KW-0325">Glycoprotein</keyword>
<keyword id="KW-0336">GPI-anchor</keyword>
<keyword id="KW-0449">Lipoprotein</keyword>
<keyword id="KW-0472">Membrane</keyword>
<keyword id="KW-1185">Reference proteome</keyword>
<keyword id="KW-0964">Secreted</keyword>
<keyword id="KW-0732">Signal</keyword>
<keyword id="KW-0843">Virulence</keyword>